<feature type="chain" id="PRO_1000020509" description="Threonine--tRNA ligase">
    <location>
        <begin position="1"/>
        <end position="642"/>
    </location>
</feature>
<feature type="domain" description="TGS" evidence="2">
    <location>
        <begin position="1"/>
        <end position="61"/>
    </location>
</feature>
<feature type="region of interest" description="Catalytic" evidence="1">
    <location>
        <begin position="243"/>
        <end position="534"/>
    </location>
</feature>
<feature type="binding site" evidence="1">
    <location>
        <position position="334"/>
    </location>
    <ligand>
        <name>Zn(2+)</name>
        <dbReference type="ChEBI" id="CHEBI:29105"/>
    </ligand>
</feature>
<feature type="binding site" evidence="1">
    <location>
        <position position="385"/>
    </location>
    <ligand>
        <name>Zn(2+)</name>
        <dbReference type="ChEBI" id="CHEBI:29105"/>
    </ligand>
</feature>
<feature type="binding site" evidence="1">
    <location>
        <position position="511"/>
    </location>
    <ligand>
        <name>Zn(2+)</name>
        <dbReference type="ChEBI" id="CHEBI:29105"/>
    </ligand>
</feature>
<evidence type="ECO:0000255" key="1">
    <source>
        <dbReference type="HAMAP-Rule" id="MF_00184"/>
    </source>
</evidence>
<evidence type="ECO:0000255" key="2">
    <source>
        <dbReference type="PROSITE-ProRule" id="PRU01228"/>
    </source>
</evidence>
<accession>Q0HV45</accession>
<name>SYT_SHESR</name>
<reference key="1">
    <citation type="submission" date="2006-08" db="EMBL/GenBank/DDBJ databases">
        <title>Complete sequence of chromosome 1 of Shewanella sp. MR-7.</title>
        <authorList>
            <person name="Copeland A."/>
            <person name="Lucas S."/>
            <person name="Lapidus A."/>
            <person name="Barry K."/>
            <person name="Detter J.C."/>
            <person name="Glavina del Rio T."/>
            <person name="Hammon N."/>
            <person name="Israni S."/>
            <person name="Dalin E."/>
            <person name="Tice H."/>
            <person name="Pitluck S."/>
            <person name="Kiss H."/>
            <person name="Brettin T."/>
            <person name="Bruce D."/>
            <person name="Han C."/>
            <person name="Tapia R."/>
            <person name="Gilna P."/>
            <person name="Schmutz J."/>
            <person name="Larimer F."/>
            <person name="Land M."/>
            <person name="Hauser L."/>
            <person name="Kyrpides N."/>
            <person name="Mikhailova N."/>
            <person name="Nealson K."/>
            <person name="Konstantinidis K."/>
            <person name="Klappenbach J."/>
            <person name="Tiedje J."/>
            <person name="Richardson P."/>
        </authorList>
    </citation>
    <scope>NUCLEOTIDE SEQUENCE [LARGE SCALE GENOMIC DNA]</scope>
    <source>
        <strain>MR-7</strain>
    </source>
</reference>
<proteinExistence type="inferred from homology"/>
<sequence>MPVITLPDGSKREFAHPVSTLDVAADIGPGLAKACIAGRVNGELKDACDLIETDAELSIITAKDEEGIEILRHSCAHLLGHAIKQLWPQTKMAIGPVIDNGFYYDIDLEHKLTQEDIEALEKRMLELAKTNYDVVKRVVSWQEARDTFAARGEEYKIAILDENISKDATPALYHHEEYTDMCRGPHVPNMRFCHHFKLMSIAGAYWRGNSENKMLQRIYGTAWADKKALSTHLARLEEAAKRDHRKIGKQLDLYHMQEEAPGMVFWHNDGWSIFLELERFIRRKLNQYTYQEVKGPLMMDRVLWERSGHWDKYSEAMFTTSSENREYAVKPMNCPGHVQIFNQGLKSYRDLPLRMAEFGCCHRNEPSGSLHGLMRVRGFTQDDAHIFCTEDQVQAEVSSCIQMVYDTYSTFGFENIVVKLSTRPEKRIGDDAMWDRAEEALKQALRAKNIEFTILPGEGAFYGPKIEFTLHDCLDRAWQCGTVQLDYALPSRLGATYVAEDNSRQTPVMIHRAILGSLERFLGILIEEYAGRFPTWLAPMQVVVMNITDKQADYVEEVVKFFKEQGIRASFDLRNEKIGFKIREHTLRRVPYLLVVGDQEMENKEVAVRTRDGVDLGKMRIEDFAAKIHQQISLRSLKLLEE</sequence>
<gene>
    <name evidence="1" type="primary">thrS</name>
    <name type="ordered locus">Shewmr7_2021</name>
</gene>
<organism>
    <name type="scientific">Shewanella sp. (strain MR-7)</name>
    <dbReference type="NCBI Taxonomy" id="60481"/>
    <lineage>
        <taxon>Bacteria</taxon>
        <taxon>Pseudomonadati</taxon>
        <taxon>Pseudomonadota</taxon>
        <taxon>Gammaproteobacteria</taxon>
        <taxon>Alteromonadales</taxon>
        <taxon>Shewanellaceae</taxon>
        <taxon>Shewanella</taxon>
    </lineage>
</organism>
<keyword id="KW-0030">Aminoacyl-tRNA synthetase</keyword>
<keyword id="KW-0067">ATP-binding</keyword>
<keyword id="KW-0963">Cytoplasm</keyword>
<keyword id="KW-0436">Ligase</keyword>
<keyword id="KW-0479">Metal-binding</keyword>
<keyword id="KW-0547">Nucleotide-binding</keyword>
<keyword id="KW-0648">Protein biosynthesis</keyword>
<keyword id="KW-0694">RNA-binding</keyword>
<keyword id="KW-0820">tRNA-binding</keyword>
<keyword id="KW-0862">Zinc</keyword>
<comment type="function">
    <text evidence="1">Catalyzes the attachment of threonine to tRNA(Thr) in a two-step reaction: L-threonine is first activated by ATP to form Thr-AMP and then transferred to the acceptor end of tRNA(Thr). Also edits incorrectly charged L-seryl-tRNA(Thr).</text>
</comment>
<comment type="catalytic activity">
    <reaction evidence="1">
        <text>tRNA(Thr) + L-threonine + ATP = L-threonyl-tRNA(Thr) + AMP + diphosphate + H(+)</text>
        <dbReference type="Rhea" id="RHEA:24624"/>
        <dbReference type="Rhea" id="RHEA-COMP:9670"/>
        <dbReference type="Rhea" id="RHEA-COMP:9704"/>
        <dbReference type="ChEBI" id="CHEBI:15378"/>
        <dbReference type="ChEBI" id="CHEBI:30616"/>
        <dbReference type="ChEBI" id="CHEBI:33019"/>
        <dbReference type="ChEBI" id="CHEBI:57926"/>
        <dbReference type="ChEBI" id="CHEBI:78442"/>
        <dbReference type="ChEBI" id="CHEBI:78534"/>
        <dbReference type="ChEBI" id="CHEBI:456215"/>
        <dbReference type="EC" id="6.1.1.3"/>
    </reaction>
</comment>
<comment type="cofactor">
    <cofactor evidence="1">
        <name>Zn(2+)</name>
        <dbReference type="ChEBI" id="CHEBI:29105"/>
    </cofactor>
    <text evidence="1">Binds 1 zinc ion per subunit.</text>
</comment>
<comment type="subunit">
    <text evidence="1">Homodimer.</text>
</comment>
<comment type="subcellular location">
    <subcellularLocation>
        <location evidence="1">Cytoplasm</location>
    </subcellularLocation>
</comment>
<comment type="similarity">
    <text evidence="1">Belongs to the class-II aminoacyl-tRNA synthetase family.</text>
</comment>
<dbReference type="EC" id="6.1.1.3" evidence="1"/>
<dbReference type="EMBL" id="CP000444">
    <property type="protein sequence ID" value="ABI43010.1"/>
    <property type="molecule type" value="Genomic_DNA"/>
</dbReference>
<dbReference type="SMR" id="Q0HV45"/>
<dbReference type="KEGG" id="shm:Shewmr7_2021"/>
<dbReference type="HOGENOM" id="CLU_008554_0_1_6"/>
<dbReference type="GO" id="GO:0005829">
    <property type="term" value="C:cytosol"/>
    <property type="evidence" value="ECO:0007669"/>
    <property type="project" value="TreeGrafter"/>
</dbReference>
<dbReference type="GO" id="GO:0005524">
    <property type="term" value="F:ATP binding"/>
    <property type="evidence" value="ECO:0007669"/>
    <property type="project" value="UniProtKB-UniRule"/>
</dbReference>
<dbReference type="GO" id="GO:0046872">
    <property type="term" value="F:metal ion binding"/>
    <property type="evidence" value="ECO:0007669"/>
    <property type="project" value="UniProtKB-KW"/>
</dbReference>
<dbReference type="GO" id="GO:0004829">
    <property type="term" value="F:threonine-tRNA ligase activity"/>
    <property type="evidence" value="ECO:0007669"/>
    <property type="project" value="UniProtKB-UniRule"/>
</dbReference>
<dbReference type="GO" id="GO:0000049">
    <property type="term" value="F:tRNA binding"/>
    <property type="evidence" value="ECO:0007669"/>
    <property type="project" value="UniProtKB-KW"/>
</dbReference>
<dbReference type="GO" id="GO:0006435">
    <property type="term" value="P:threonyl-tRNA aminoacylation"/>
    <property type="evidence" value="ECO:0007669"/>
    <property type="project" value="UniProtKB-UniRule"/>
</dbReference>
<dbReference type="CDD" id="cd01667">
    <property type="entry name" value="TGS_ThrRS"/>
    <property type="match status" value="1"/>
</dbReference>
<dbReference type="CDD" id="cd00860">
    <property type="entry name" value="ThrRS_anticodon"/>
    <property type="match status" value="1"/>
</dbReference>
<dbReference type="CDD" id="cd00771">
    <property type="entry name" value="ThrRS_core"/>
    <property type="match status" value="1"/>
</dbReference>
<dbReference type="FunFam" id="3.10.20.30:FF:000005">
    <property type="entry name" value="Threonine--tRNA ligase"/>
    <property type="match status" value="1"/>
</dbReference>
<dbReference type="FunFam" id="3.30.54.20:FF:000002">
    <property type="entry name" value="Threonine--tRNA ligase"/>
    <property type="match status" value="1"/>
</dbReference>
<dbReference type="FunFam" id="3.30.930.10:FF:000002">
    <property type="entry name" value="Threonine--tRNA ligase"/>
    <property type="match status" value="1"/>
</dbReference>
<dbReference type="FunFam" id="3.40.50.800:FF:000001">
    <property type="entry name" value="Threonine--tRNA ligase"/>
    <property type="match status" value="1"/>
</dbReference>
<dbReference type="FunFam" id="3.30.980.10:FF:000005">
    <property type="entry name" value="Threonyl-tRNA synthetase, mitochondrial"/>
    <property type="match status" value="1"/>
</dbReference>
<dbReference type="Gene3D" id="3.10.20.30">
    <property type="match status" value="1"/>
</dbReference>
<dbReference type="Gene3D" id="3.30.54.20">
    <property type="match status" value="1"/>
</dbReference>
<dbReference type="Gene3D" id="3.40.50.800">
    <property type="entry name" value="Anticodon-binding domain"/>
    <property type="match status" value="1"/>
</dbReference>
<dbReference type="Gene3D" id="3.30.930.10">
    <property type="entry name" value="Bira Bifunctional Protein, Domain 2"/>
    <property type="match status" value="1"/>
</dbReference>
<dbReference type="Gene3D" id="3.30.980.10">
    <property type="entry name" value="Threonyl-trna Synthetase, Chain A, domain 2"/>
    <property type="match status" value="1"/>
</dbReference>
<dbReference type="HAMAP" id="MF_00184">
    <property type="entry name" value="Thr_tRNA_synth"/>
    <property type="match status" value="1"/>
</dbReference>
<dbReference type="InterPro" id="IPR002314">
    <property type="entry name" value="aa-tRNA-synt_IIb"/>
</dbReference>
<dbReference type="InterPro" id="IPR006195">
    <property type="entry name" value="aa-tRNA-synth_II"/>
</dbReference>
<dbReference type="InterPro" id="IPR045864">
    <property type="entry name" value="aa-tRNA-synth_II/BPL/LPL"/>
</dbReference>
<dbReference type="InterPro" id="IPR004154">
    <property type="entry name" value="Anticodon-bd"/>
</dbReference>
<dbReference type="InterPro" id="IPR036621">
    <property type="entry name" value="Anticodon-bd_dom_sf"/>
</dbReference>
<dbReference type="InterPro" id="IPR012675">
    <property type="entry name" value="Beta-grasp_dom_sf"/>
</dbReference>
<dbReference type="InterPro" id="IPR004095">
    <property type="entry name" value="TGS"/>
</dbReference>
<dbReference type="InterPro" id="IPR012676">
    <property type="entry name" value="TGS-like"/>
</dbReference>
<dbReference type="InterPro" id="IPR002320">
    <property type="entry name" value="Thr-tRNA-ligase_IIa"/>
</dbReference>
<dbReference type="InterPro" id="IPR018163">
    <property type="entry name" value="Thr/Ala-tRNA-synth_IIc_edit"/>
</dbReference>
<dbReference type="InterPro" id="IPR047246">
    <property type="entry name" value="ThrRS_anticodon"/>
</dbReference>
<dbReference type="InterPro" id="IPR033728">
    <property type="entry name" value="ThrRS_core"/>
</dbReference>
<dbReference type="InterPro" id="IPR012947">
    <property type="entry name" value="tRNA_SAD"/>
</dbReference>
<dbReference type="NCBIfam" id="TIGR00418">
    <property type="entry name" value="thrS"/>
    <property type="match status" value="1"/>
</dbReference>
<dbReference type="PANTHER" id="PTHR11451:SF44">
    <property type="entry name" value="THREONINE--TRNA LIGASE, CHLOROPLASTIC_MITOCHONDRIAL 2"/>
    <property type="match status" value="1"/>
</dbReference>
<dbReference type="PANTHER" id="PTHR11451">
    <property type="entry name" value="THREONINE-TRNA LIGASE"/>
    <property type="match status" value="1"/>
</dbReference>
<dbReference type="Pfam" id="PF03129">
    <property type="entry name" value="HGTP_anticodon"/>
    <property type="match status" value="1"/>
</dbReference>
<dbReference type="Pfam" id="PF02824">
    <property type="entry name" value="TGS"/>
    <property type="match status" value="1"/>
</dbReference>
<dbReference type="Pfam" id="PF00587">
    <property type="entry name" value="tRNA-synt_2b"/>
    <property type="match status" value="1"/>
</dbReference>
<dbReference type="Pfam" id="PF07973">
    <property type="entry name" value="tRNA_SAD"/>
    <property type="match status" value="1"/>
</dbReference>
<dbReference type="PRINTS" id="PR01047">
    <property type="entry name" value="TRNASYNTHTHR"/>
</dbReference>
<dbReference type="SMART" id="SM00863">
    <property type="entry name" value="tRNA_SAD"/>
    <property type="match status" value="1"/>
</dbReference>
<dbReference type="SUPFAM" id="SSF52954">
    <property type="entry name" value="Class II aaRS ABD-related"/>
    <property type="match status" value="1"/>
</dbReference>
<dbReference type="SUPFAM" id="SSF55681">
    <property type="entry name" value="Class II aaRS and biotin synthetases"/>
    <property type="match status" value="1"/>
</dbReference>
<dbReference type="SUPFAM" id="SSF81271">
    <property type="entry name" value="TGS-like"/>
    <property type="match status" value="1"/>
</dbReference>
<dbReference type="SUPFAM" id="SSF55186">
    <property type="entry name" value="ThrRS/AlaRS common domain"/>
    <property type="match status" value="1"/>
</dbReference>
<dbReference type="PROSITE" id="PS50862">
    <property type="entry name" value="AA_TRNA_LIGASE_II"/>
    <property type="match status" value="1"/>
</dbReference>
<dbReference type="PROSITE" id="PS51880">
    <property type="entry name" value="TGS"/>
    <property type="match status" value="1"/>
</dbReference>
<protein>
    <recommendedName>
        <fullName evidence="1">Threonine--tRNA ligase</fullName>
        <ecNumber evidence="1">6.1.1.3</ecNumber>
    </recommendedName>
    <alternativeName>
        <fullName evidence="1">Threonyl-tRNA synthetase</fullName>
        <shortName evidence="1">ThrRS</shortName>
    </alternativeName>
</protein>